<keyword id="KW-0903">Direct protein sequencing</keyword>
<keyword id="KW-0349">Heme</keyword>
<keyword id="KW-0408">Iron</keyword>
<keyword id="KW-0479">Metal-binding</keyword>
<keyword id="KW-0503">Monooxygenase</keyword>
<keyword id="KW-0560">Oxidoreductase</keyword>
<organism>
    <name type="scientific">Rhodococcus rhodochrous</name>
    <dbReference type="NCBI Taxonomy" id="1829"/>
    <lineage>
        <taxon>Bacteria</taxon>
        <taxon>Bacillati</taxon>
        <taxon>Actinomycetota</taxon>
        <taxon>Actinomycetes</taxon>
        <taxon>Mycobacteriales</taxon>
        <taxon>Nocardiaceae</taxon>
        <taxon>Rhodococcus</taxon>
    </lineage>
</organism>
<name>CPXX_RHORH</name>
<comment type="function">
    <text>P450-RRI catalyzes the O-dealkylation of 2-ethoxyphenol and 2-methoxyphenol to produce catechol. The cytochrome binds other ortho-substituted phenols, including 2-ethoxyphenol, 2-methylphenol and 2-chlorophenol.</text>
</comment>
<comment type="cofactor">
    <cofactor evidence="1">
        <name>heme</name>
        <dbReference type="ChEBI" id="CHEBI:30413"/>
    </cofactor>
</comment>
<comment type="induction">
    <text>By 2-ethoxyphenol.</text>
</comment>
<comment type="similarity">
    <text evidence="2">Belongs to the cytochrome P450 family.</text>
</comment>
<feature type="chain" id="PRO_0000052232" description="Cytochrome P450-RR1">
    <location>
        <begin position="1"/>
        <end position="20" status="greater than"/>
    </location>
</feature>
<feature type="non-terminal residue">
    <location>
        <position position="20"/>
    </location>
</feature>
<proteinExistence type="evidence at protein level"/>
<accession>P31718</accession>
<sequence length="20" mass="2428">TSTLSWLDEITMEELERNPY</sequence>
<evidence type="ECO:0000250" key="1"/>
<evidence type="ECO:0000305" key="2"/>
<reference key="1">
    <citation type="journal article" date="1993" name="Eur. J. Biochem.">
        <title>Purification and characterization of cytochrome P450RR1 from Rhodococcus rhodochrous.</title>
        <authorList>
            <person name="Eltis L.D."/>
            <person name="Karlson U."/>
            <person name="Timmis K.N."/>
        </authorList>
    </citation>
    <scope>PROTEIN SEQUENCE</scope>
    <source>
        <strain>116</strain>
    </source>
</reference>
<protein>
    <recommendedName>
        <fullName>Cytochrome P450-RR1</fullName>
        <shortName>Cytochrome P450RR1</shortName>
        <ecNumber>1.14.-.-</ecNumber>
    </recommendedName>
    <alternativeName>
        <fullName>Cytochrome P450-RRI</fullName>
    </alternativeName>
</protein>
<dbReference type="EC" id="1.14.-.-"/>
<dbReference type="GO" id="GO:0046872">
    <property type="term" value="F:metal ion binding"/>
    <property type="evidence" value="ECO:0007669"/>
    <property type="project" value="UniProtKB-KW"/>
</dbReference>
<dbReference type="GO" id="GO:0004497">
    <property type="term" value="F:monooxygenase activity"/>
    <property type="evidence" value="ECO:0007669"/>
    <property type="project" value="UniProtKB-KW"/>
</dbReference>